<proteinExistence type="evidence at protein level"/>
<keyword id="KW-0001">2Fe-2S</keyword>
<keyword id="KW-0150">Chloroplast</keyword>
<keyword id="KW-0903">Direct protein sequencing</keyword>
<keyword id="KW-0249">Electron transport</keyword>
<keyword id="KW-0408">Iron</keyword>
<keyword id="KW-0411">Iron-sulfur</keyword>
<keyword id="KW-0479">Metal-binding</keyword>
<keyword id="KW-0934">Plastid</keyword>
<keyword id="KW-0813">Transport</keyword>
<reference key="1">
    <citation type="journal article" date="1991" name="Biochem. J.">
        <title>Amino acid sequences of Euglena viridis ferredoxin and cytochromes c.</title>
        <authorList>
            <person name="Ambler R.P."/>
            <person name="Kamen M.D."/>
            <person name="Bartsch R.G."/>
            <person name="Meyer T.E."/>
        </authorList>
    </citation>
    <scope>PROTEIN SEQUENCE</scope>
    <source>
        <strain>LJ-1</strain>
    </source>
</reference>
<comment type="function">
    <text>Ferredoxins are iron-sulfur proteins that transfer electrons in a wide variety of metabolic reactions.</text>
</comment>
<comment type="cofactor">
    <cofactor>
        <name>[2Fe-2S] cluster</name>
        <dbReference type="ChEBI" id="CHEBI:190135"/>
    </cofactor>
    <text>Binds 1 [2Fe-2S] cluster.</text>
</comment>
<comment type="subcellular location">
    <subcellularLocation>
        <location>Plastid</location>
        <location>Chloroplast</location>
    </subcellularLocation>
</comment>
<comment type="similarity">
    <text evidence="2">Belongs to the 2Fe2S plant-type ferredoxin family.</text>
</comment>
<accession>P22341</accession>
<dbReference type="PIR" id="S15425">
    <property type="entry name" value="S15425"/>
</dbReference>
<dbReference type="SMR" id="P22341"/>
<dbReference type="GO" id="GO:0009507">
    <property type="term" value="C:chloroplast"/>
    <property type="evidence" value="ECO:0007669"/>
    <property type="project" value="UniProtKB-SubCell"/>
</dbReference>
<dbReference type="GO" id="GO:0051537">
    <property type="term" value="F:2 iron, 2 sulfur cluster binding"/>
    <property type="evidence" value="ECO:0007669"/>
    <property type="project" value="UniProtKB-KW"/>
</dbReference>
<dbReference type="GO" id="GO:0009055">
    <property type="term" value="F:electron transfer activity"/>
    <property type="evidence" value="ECO:0007669"/>
    <property type="project" value="InterPro"/>
</dbReference>
<dbReference type="GO" id="GO:0046872">
    <property type="term" value="F:metal ion binding"/>
    <property type="evidence" value="ECO:0007669"/>
    <property type="project" value="UniProtKB-KW"/>
</dbReference>
<dbReference type="GO" id="GO:0022900">
    <property type="term" value="P:electron transport chain"/>
    <property type="evidence" value="ECO:0007669"/>
    <property type="project" value="InterPro"/>
</dbReference>
<dbReference type="CDD" id="cd00207">
    <property type="entry name" value="fer2"/>
    <property type="match status" value="1"/>
</dbReference>
<dbReference type="FunFam" id="3.10.20.30:FF:000014">
    <property type="entry name" value="Ferredoxin"/>
    <property type="match status" value="1"/>
</dbReference>
<dbReference type="Gene3D" id="3.10.20.30">
    <property type="match status" value="1"/>
</dbReference>
<dbReference type="InterPro" id="IPR036010">
    <property type="entry name" value="2Fe-2S_ferredoxin-like_sf"/>
</dbReference>
<dbReference type="InterPro" id="IPR001041">
    <property type="entry name" value="2Fe-2S_ferredoxin-type"/>
</dbReference>
<dbReference type="InterPro" id="IPR006058">
    <property type="entry name" value="2Fe2S_fd_BS"/>
</dbReference>
<dbReference type="InterPro" id="IPR012675">
    <property type="entry name" value="Beta-grasp_dom_sf"/>
</dbReference>
<dbReference type="InterPro" id="IPR010241">
    <property type="entry name" value="Fd_pln"/>
</dbReference>
<dbReference type="NCBIfam" id="TIGR02008">
    <property type="entry name" value="fdx_plant"/>
    <property type="match status" value="1"/>
</dbReference>
<dbReference type="PANTHER" id="PTHR43112">
    <property type="entry name" value="FERREDOXIN"/>
    <property type="match status" value="1"/>
</dbReference>
<dbReference type="PANTHER" id="PTHR43112:SF3">
    <property type="entry name" value="FERREDOXIN-2, CHLOROPLASTIC"/>
    <property type="match status" value="1"/>
</dbReference>
<dbReference type="Pfam" id="PF00111">
    <property type="entry name" value="Fer2"/>
    <property type="match status" value="1"/>
</dbReference>
<dbReference type="SUPFAM" id="SSF54292">
    <property type="entry name" value="2Fe-2S ferredoxin-like"/>
    <property type="match status" value="1"/>
</dbReference>
<dbReference type="PROSITE" id="PS00197">
    <property type="entry name" value="2FE2S_FER_1"/>
    <property type="match status" value="1"/>
</dbReference>
<dbReference type="PROSITE" id="PS51085">
    <property type="entry name" value="2FE2S_FER_2"/>
    <property type="match status" value="1"/>
</dbReference>
<evidence type="ECO:0000255" key="1">
    <source>
        <dbReference type="PROSITE-ProRule" id="PRU00465"/>
    </source>
</evidence>
<evidence type="ECO:0000305" key="2"/>
<sequence length="96" mass="10360">ATYSVKLINPDGEVTIECGEDQYILDAAEDAGIDLPYSCRAGACSSCTGIVKEGTVDQSDQSFLDDDQMAKGFCLTCTTYPTSNCTIETHKEDDLF</sequence>
<organism>
    <name type="scientific">Euglena viridis</name>
    <name type="common">Cercaria viridis</name>
    <dbReference type="NCBI Taxonomy" id="3040"/>
    <lineage>
        <taxon>Eukaryota</taxon>
        <taxon>Discoba</taxon>
        <taxon>Euglenozoa</taxon>
        <taxon>Euglenida</taxon>
        <taxon>Spirocuta</taxon>
        <taxon>Euglenophyceae</taxon>
        <taxon>Euglenales</taxon>
        <taxon>Euglenaceae</taxon>
        <taxon>Euglena</taxon>
    </lineage>
</organism>
<name>FER_EUGVI</name>
<feature type="chain" id="PRO_0000189332" description="Ferredoxin">
    <location>
        <begin position="1"/>
        <end position="96"/>
    </location>
</feature>
<feature type="domain" description="2Fe-2S ferredoxin-type" evidence="1">
    <location>
        <begin position="3"/>
        <end position="93"/>
    </location>
</feature>
<feature type="binding site" evidence="1">
    <location>
        <position position="39"/>
    </location>
    <ligand>
        <name>[2Fe-2S] cluster</name>
        <dbReference type="ChEBI" id="CHEBI:190135"/>
    </ligand>
</feature>
<feature type="binding site" evidence="1">
    <location>
        <position position="44"/>
    </location>
    <ligand>
        <name>[2Fe-2S] cluster</name>
        <dbReference type="ChEBI" id="CHEBI:190135"/>
    </ligand>
</feature>
<feature type="binding site" evidence="1">
    <location>
        <position position="47"/>
    </location>
    <ligand>
        <name>[2Fe-2S] cluster</name>
        <dbReference type="ChEBI" id="CHEBI:190135"/>
    </ligand>
</feature>
<feature type="binding site" evidence="1">
    <location>
        <position position="77"/>
    </location>
    <ligand>
        <name>[2Fe-2S] cluster</name>
        <dbReference type="ChEBI" id="CHEBI:190135"/>
    </ligand>
</feature>
<protein>
    <recommendedName>
        <fullName>Ferredoxin</fullName>
    </recommendedName>
</protein>